<comment type="function">
    <text evidence="1">Mitochondrial protein-lysine N-methyltransferase that trimethylates adenine nucleotide translocases ANT2/SLC25A5 and ANT3/SLC25A6, thereby regulating mitochondrial respiration. Probably also trimethylates ANT1/SLC25A4.</text>
</comment>
<comment type="catalytic activity">
    <reaction evidence="1">
        <text>L-lysyl-[protein] + 3 S-adenosyl-L-methionine = N(6),N(6),N(6)-trimethyl-L-lysyl-[protein] + 3 S-adenosyl-L-homocysteine + 3 H(+)</text>
        <dbReference type="Rhea" id="RHEA:54192"/>
        <dbReference type="Rhea" id="RHEA-COMP:9752"/>
        <dbReference type="Rhea" id="RHEA-COMP:13826"/>
        <dbReference type="ChEBI" id="CHEBI:15378"/>
        <dbReference type="ChEBI" id="CHEBI:29969"/>
        <dbReference type="ChEBI" id="CHEBI:57856"/>
        <dbReference type="ChEBI" id="CHEBI:59789"/>
        <dbReference type="ChEBI" id="CHEBI:61961"/>
    </reaction>
    <physiologicalReaction direction="left-to-right" evidence="1">
        <dbReference type="Rhea" id="RHEA:54193"/>
    </physiologicalReaction>
</comment>
<comment type="subcellular location">
    <subcellularLocation>
        <location evidence="1">Mitochondrion membrane</location>
        <topology evidence="2">Single-pass membrane protein</topology>
    </subcellularLocation>
</comment>
<comment type="domain">
    <text evidence="1">The pre-methyltransferase (preMT) region is responsible for mitochondrial localization.</text>
</comment>
<comment type="similarity">
    <text evidence="3">Belongs to the ANT/ATPSC lysine N-methyltransferase family.</text>
</comment>
<sequence length="229" mass="24740">MDQDDPAEALTELREKRLGLLEIVQAAAGSGLAVYTIWALLLQPGFRRVPLRLQVPYVGASARQVENVLSLLRGRPGKMVDLGSGDGRIVLAAHQCGLRPAMGYELNPWLVGLARLHAWRAGCSASVCYHRKDLWKVSLRDCHNVSVFLAPSVLQLLEDKLQAELPVGARVVSGRFPLPTWQPVAVVGEGTDRVWAYDVHGSGPTVSSCGVPIKAIPESSSTLVPRAPV</sequence>
<dbReference type="EC" id="2.1.1.-" evidence="1"/>
<dbReference type="EMBL" id="AK146214">
    <property type="protein sequence ID" value="BAE26983.1"/>
    <property type="molecule type" value="mRNA"/>
</dbReference>
<dbReference type="EMBL" id="AK162337">
    <property type="protein sequence ID" value="BAE36860.1"/>
    <property type="molecule type" value="mRNA"/>
</dbReference>
<dbReference type="EMBL" id="BC096050">
    <property type="protein sequence ID" value="AAH96050.1"/>
    <property type="molecule type" value="mRNA"/>
</dbReference>
<dbReference type="CCDS" id="CCDS28528.1"/>
<dbReference type="RefSeq" id="NP_663385.2">
    <property type="nucleotide sequence ID" value="NM_145410.4"/>
</dbReference>
<dbReference type="SMR" id="Q501J2"/>
<dbReference type="FunCoup" id="Q501J2">
    <property type="interactions" value="440"/>
</dbReference>
<dbReference type="STRING" id="10090.ENSMUSP00000072518"/>
<dbReference type="GlyGen" id="Q501J2">
    <property type="glycosylation" value="2 sites, 1 N-linked glycan (1 site)"/>
</dbReference>
<dbReference type="PhosphoSitePlus" id="Q501J2"/>
<dbReference type="SwissPalm" id="Q501J2"/>
<dbReference type="PaxDb" id="10090-ENSMUSP00000072518"/>
<dbReference type="PeptideAtlas" id="Q501J2"/>
<dbReference type="ProteomicsDB" id="267685"/>
<dbReference type="Pumba" id="Q501J2"/>
<dbReference type="Ensembl" id="ENSMUST00000072735.9">
    <property type="protein sequence ID" value="ENSMUSP00000072518.8"/>
    <property type="gene ID" value="ENSMUSG00000057411.10"/>
</dbReference>
<dbReference type="GeneID" id="214917"/>
<dbReference type="KEGG" id="mmu:214917"/>
<dbReference type="UCSC" id="uc008bbw.2">
    <property type="organism name" value="mouse"/>
</dbReference>
<dbReference type="AGR" id="MGI:2384888"/>
<dbReference type="CTD" id="65990"/>
<dbReference type="MGI" id="MGI:2384888">
    <property type="gene designation" value="Antkmt"/>
</dbReference>
<dbReference type="VEuPathDB" id="HostDB:ENSMUSG00000057411"/>
<dbReference type="eggNOG" id="KOG4058">
    <property type="taxonomic scope" value="Eukaryota"/>
</dbReference>
<dbReference type="GeneTree" id="ENSGT00390000014771"/>
<dbReference type="HOGENOM" id="CLU_068443_4_2_1"/>
<dbReference type="InParanoid" id="Q501J2"/>
<dbReference type="OMA" id="HEFRIPG"/>
<dbReference type="OrthoDB" id="66144at2759"/>
<dbReference type="PhylomeDB" id="Q501J2"/>
<dbReference type="TreeFam" id="TF314984"/>
<dbReference type="BioGRID-ORCS" id="214917">
    <property type="hits" value="4 hits in 78 CRISPR screens"/>
</dbReference>
<dbReference type="ChiTaRS" id="Fam173a">
    <property type="organism name" value="mouse"/>
</dbReference>
<dbReference type="PRO" id="PR:Q501J2"/>
<dbReference type="Proteomes" id="UP000000589">
    <property type="component" value="Chromosome 17"/>
</dbReference>
<dbReference type="RNAct" id="Q501J2">
    <property type="molecule type" value="protein"/>
</dbReference>
<dbReference type="Bgee" id="ENSMUSG00000057411">
    <property type="expression patterns" value="Expressed in choroid plexus and 108 other cell types or tissues"/>
</dbReference>
<dbReference type="ExpressionAtlas" id="Q501J2">
    <property type="expression patterns" value="baseline and differential"/>
</dbReference>
<dbReference type="GO" id="GO:0031966">
    <property type="term" value="C:mitochondrial membrane"/>
    <property type="evidence" value="ECO:0007669"/>
    <property type="project" value="UniProtKB-SubCell"/>
</dbReference>
<dbReference type="GO" id="GO:0005739">
    <property type="term" value="C:mitochondrion"/>
    <property type="evidence" value="ECO:0000250"/>
    <property type="project" value="UniProtKB"/>
</dbReference>
<dbReference type="GO" id="GO:0016279">
    <property type="term" value="F:protein-lysine N-methyltransferase activity"/>
    <property type="evidence" value="ECO:0000250"/>
    <property type="project" value="UniProtKB"/>
</dbReference>
<dbReference type="GO" id="GO:0018023">
    <property type="term" value="P:peptidyl-lysine trimethylation"/>
    <property type="evidence" value="ECO:0000250"/>
    <property type="project" value="UniProtKB"/>
</dbReference>
<dbReference type="Gene3D" id="3.40.50.150">
    <property type="entry name" value="Vaccinia Virus protein VP39"/>
    <property type="match status" value="1"/>
</dbReference>
<dbReference type="InterPro" id="IPR026170">
    <property type="entry name" value="FAM173A/B"/>
</dbReference>
<dbReference type="InterPro" id="IPR029063">
    <property type="entry name" value="SAM-dependent_MTases_sf"/>
</dbReference>
<dbReference type="PANTHER" id="PTHR13610:SF5">
    <property type="entry name" value="ADENINE NUCLEOTIDE TRANSLOCASE LYSINE N-METHYLTRANSFERASE"/>
    <property type="match status" value="1"/>
</dbReference>
<dbReference type="PANTHER" id="PTHR13610">
    <property type="entry name" value="METHYLTRANSFERASE DOMAIN-CONTAINING PROTEIN"/>
    <property type="match status" value="1"/>
</dbReference>
<dbReference type="SUPFAM" id="SSF53335">
    <property type="entry name" value="S-adenosyl-L-methionine-dependent methyltransferases"/>
    <property type="match status" value="1"/>
</dbReference>
<reference key="1">
    <citation type="journal article" date="2005" name="Science">
        <title>The transcriptional landscape of the mammalian genome.</title>
        <authorList>
            <person name="Carninci P."/>
            <person name="Kasukawa T."/>
            <person name="Katayama S."/>
            <person name="Gough J."/>
            <person name="Frith M.C."/>
            <person name="Maeda N."/>
            <person name="Oyama R."/>
            <person name="Ravasi T."/>
            <person name="Lenhard B."/>
            <person name="Wells C."/>
            <person name="Kodzius R."/>
            <person name="Shimokawa K."/>
            <person name="Bajic V.B."/>
            <person name="Brenner S.E."/>
            <person name="Batalov S."/>
            <person name="Forrest A.R."/>
            <person name="Zavolan M."/>
            <person name="Davis M.J."/>
            <person name="Wilming L.G."/>
            <person name="Aidinis V."/>
            <person name="Allen J.E."/>
            <person name="Ambesi-Impiombato A."/>
            <person name="Apweiler R."/>
            <person name="Aturaliya R.N."/>
            <person name="Bailey T.L."/>
            <person name="Bansal M."/>
            <person name="Baxter L."/>
            <person name="Beisel K.W."/>
            <person name="Bersano T."/>
            <person name="Bono H."/>
            <person name="Chalk A.M."/>
            <person name="Chiu K.P."/>
            <person name="Choudhary V."/>
            <person name="Christoffels A."/>
            <person name="Clutterbuck D.R."/>
            <person name="Crowe M.L."/>
            <person name="Dalla E."/>
            <person name="Dalrymple B.P."/>
            <person name="de Bono B."/>
            <person name="Della Gatta G."/>
            <person name="di Bernardo D."/>
            <person name="Down T."/>
            <person name="Engstrom P."/>
            <person name="Fagiolini M."/>
            <person name="Faulkner G."/>
            <person name="Fletcher C.F."/>
            <person name="Fukushima T."/>
            <person name="Furuno M."/>
            <person name="Futaki S."/>
            <person name="Gariboldi M."/>
            <person name="Georgii-Hemming P."/>
            <person name="Gingeras T.R."/>
            <person name="Gojobori T."/>
            <person name="Green R.E."/>
            <person name="Gustincich S."/>
            <person name="Harbers M."/>
            <person name="Hayashi Y."/>
            <person name="Hensch T.K."/>
            <person name="Hirokawa N."/>
            <person name="Hill D."/>
            <person name="Huminiecki L."/>
            <person name="Iacono M."/>
            <person name="Ikeo K."/>
            <person name="Iwama A."/>
            <person name="Ishikawa T."/>
            <person name="Jakt M."/>
            <person name="Kanapin A."/>
            <person name="Katoh M."/>
            <person name="Kawasawa Y."/>
            <person name="Kelso J."/>
            <person name="Kitamura H."/>
            <person name="Kitano H."/>
            <person name="Kollias G."/>
            <person name="Krishnan S.P."/>
            <person name="Kruger A."/>
            <person name="Kummerfeld S.K."/>
            <person name="Kurochkin I.V."/>
            <person name="Lareau L.F."/>
            <person name="Lazarevic D."/>
            <person name="Lipovich L."/>
            <person name="Liu J."/>
            <person name="Liuni S."/>
            <person name="McWilliam S."/>
            <person name="Madan Babu M."/>
            <person name="Madera M."/>
            <person name="Marchionni L."/>
            <person name="Matsuda H."/>
            <person name="Matsuzawa S."/>
            <person name="Miki H."/>
            <person name="Mignone F."/>
            <person name="Miyake S."/>
            <person name="Morris K."/>
            <person name="Mottagui-Tabar S."/>
            <person name="Mulder N."/>
            <person name="Nakano N."/>
            <person name="Nakauchi H."/>
            <person name="Ng P."/>
            <person name="Nilsson R."/>
            <person name="Nishiguchi S."/>
            <person name="Nishikawa S."/>
            <person name="Nori F."/>
            <person name="Ohara O."/>
            <person name="Okazaki Y."/>
            <person name="Orlando V."/>
            <person name="Pang K.C."/>
            <person name="Pavan W.J."/>
            <person name="Pavesi G."/>
            <person name="Pesole G."/>
            <person name="Petrovsky N."/>
            <person name="Piazza S."/>
            <person name="Reed J."/>
            <person name="Reid J.F."/>
            <person name="Ring B.Z."/>
            <person name="Ringwald M."/>
            <person name="Rost B."/>
            <person name="Ruan Y."/>
            <person name="Salzberg S.L."/>
            <person name="Sandelin A."/>
            <person name="Schneider C."/>
            <person name="Schoenbach C."/>
            <person name="Sekiguchi K."/>
            <person name="Semple C.A."/>
            <person name="Seno S."/>
            <person name="Sessa L."/>
            <person name="Sheng Y."/>
            <person name="Shibata Y."/>
            <person name="Shimada H."/>
            <person name="Shimada K."/>
            <person name="Silva D."/>
            <person name="Sinclair B."/>
            <person name="Sperling S."/>
            <person name="Stupka E."/>
            <person name="Sugiura K."/>
            <person name="Sultana R."/>
            <person name="Takenaka Y."/>
            <person name="Taki K."/>
            <person name="Tammoja K."/>
            <person name="Tan S.L."/>
            <person name="Tang S."/>
            <person name="Taylor M.S."/>
            <person name="Tegner J."/>
            <person name="Teichmann S.A."/>
            <person name="Ueda H.R."/>
            <person name="van Nimwegen E."/>
            <person name="Verardo R."/>
            <person name="Wei C.L."/>
            <person name="Yagi K."/>
            <person name="Yamanishi H."/>
            <person name="Zabarovsky E."/>
            <person name="Zhu S."/>
            <person name="Zimmer A."/>
            <person name="Hide W."/>
            <person name="Bult C."/>
            <person name="Grimmond S.M."/>
            <person name="Teasdale R.D."/>
            <person name="Liu E.T."/>
            <person name="Brusic V."/>
            <person name="Quackenbush J."/>
            <person name="Wahlestedt C."/>
            <person name="Mattick J.S."/>
            <person name="Hume D.A."/>
            <person name="Kai C."/>
            <person name="Sasaki D."/>
            <person name="Tomaru Y."/>
            <person name="Fukuda S."/>
            <person name="Kanamori-Katayama M."/>
            <person name="Suzuki M."/>
            <person name="Aoki J."/>
            <person name="Arakawa T."/>
            <person name="Iida J."/>
            <person name="Imamura K."/>
            <person name="Itoh M."/>
            <person name="Kato T."/>
            <person name="Kawaji H."/>
            <person name="Kawagashira N."/>
            <person name="Kawashima T."/>
            <person name="Kojima M."/>
            <person name="Kondo S."/>
            <person name="Konno H."/>
            <person name="Nakano K."/>
            <person name="Ninomiya N."/>
            <person name="Nishio T."/>
            <person name="Okada M."/>
            <person name="Plessy C."/>
            <person name="Shibata K."/>
            <person name="Shiraki T."/>
            <person name="Suzuki S."/>
            <person name="Tagami M."/>
            <person name="Waki K."/>
            <person name="Watahiki A."/>
            <person name="Okamura-Oho Y."/>
            <person name="Suzuki H."/>
            <person name="Kawai J."/>
            <person name="Hayashizaki Y."/>
        </authorList>
    </citation>
    <scope>NUCLEOTIDE SEQUENCE [LARGE SCALE MRNA]</scope>
    <source>
        <strain>BALB/cJ</strain>
        <strain>C57BL/6J</strain>
        <tissue>Cecum</tissue>
    </source>
</reference>
<reference key="2">
    <citation type="journal article" date="2004" name="Genome Res.">
        <title>The status, quality, and expansion of the NIH full-length cDNA project: the Mammalian Gene Collection (MGC).</title>
        <authorList>
            <consortium name="The MGC Project Team"/>
        </authorList>
    </citation>
    <scope>NUCLEOTIDE SEQUENCE [LARGE SCALE MRNA]</scope>
    <source>
        <strain>Czech II</strain>
        <tissue>Lung</tissue>
    </source>
</reference>
<reference key="3">
    <citation type="journal article" date="2010" name="Cell">
        <title>A tissue-specific atlas of mouse protein phosphorylation and expression.</title>
        <authorList>
            <person name="Huttlin E.L."/>
            <person name="Jedrychowski M.P."/>
            <person name="Elias J.E."/>
            <person name="Goswami T."/>
            <person name="Rad R."/>
            <person name="Beausoleil S.A."/>
            <person name="Villen J."/>
            <person name="Haas W."/>
            <person name="Sowa M.E."/>
            <person name="Gygi S.P."/>
        </authorList>
    </citation>
    <scope>IDENTIFICATION BY MASS SPECTROMETRY [LARGE SCALE ANALYSIS]</scope>
    <source>
        <tissue>Heart</tissue>
        <tissue>Kidney</tissue>
        <tissue>Lung</tissue>
        <tissue>Testis</tissue>
    </source>
</reference>
<accession>Q501J2</accession>
<proteinExistence type="evidence at protein level"/>
<name>ANKMT_MOUSE</name>
<evidence type="ECO:0000250" key="1">
    <source>
        <dbReference type="UniProtKB" id="Q9BQD7"/>
    </source>
</evidence>
<evidence type="ECO:0000255" key="2"/>
<evidence type="ECO:0000305" key="3"/>
<evidence type="ECO:0000312" key="4">
    <source>
        <dbReference type="MGI" id="MGI:2384888"/>
    </source>
</evidence>
<keyword id="KW-0472">Membrane</keyword>
<keyword id="KW-0489">Methyltransferase</keyword>
<keyword id="KW-0496">Mitochondrion</keyword>
<keyword id="KW-1185">Reference proteome</keyword>
<keyword id="KW-0949">S-adenosyl-L-methionine</keyword>
<keyword id="KW-0808">Transferase</keyword>
<keyword id="KW-0812">Transmembrane</keyword>
<keyword id="KW-1133">Transmembrane helix</keyword>
<feature type="chain" id="PRO_0000263722" description="Adenine nucleotide translocase lysine N-methyltransferase">
    <location>
        <begin position="1"/>
        <end position="229"/>
    </location>
</feature>
<feature type="transmembrane region" description="Helical" evidence="2">
    <location>
        <begin position="20"/>
        <end position="42"/>
    </location>
</feature>
<feature type="region of interest" description="N-terminal sequence (NTS)" evidence="1">
    <location>
        <begin position="1"/>
        <end position="22"/>
    </location>
</feature>
<feature type="region of interest" description="Methyltransferase (MTase)" evidence="1">
    <location>
        <begin position="43"/>
        <end position="77"/>
    </location>
</feature>
<feature type="region of interest" description="Pre-methyltransferase (preMT)" evidence="1">
    <location>
        <begin position="43"/>
        <end position="77"/>
    </location>
</feature>
<gene>
    <name evidence="4" type="primary">Antkmt</name>
    <name evidence="4" type="synonym">Fam173a</name>
</gene>
<protein>
    <recommendedName>
        <fullName evidence="1">Adenine nucleotide translocase lysine N-methyltransferase</fullName>
        <shortName evidence="1">ANT-KMT</shortName>
        <ecNumber evidence="1">2.1.1.-</ecNumber>
    </recommendedName>
</protein>
<organism>
    <name type="scientific">Mus musculus</name>
    <name type="common">Mouse</name>
    <dbReference type="NCBI Taxonomy" id="10090"/>
    <lineage>
        <taxon>Eukaryota</taxon>
        <taxon>Metazoa</taxon>
        <taxon>Chordata</taxon>
        <taxon>Craniata</taxon>
        <taxon>Vertebrata</taxon>
        <taxon>Euteleostomi</taxon>
        <taxon>Mammalia</taxon>
        <taxon>Eutheria</taxon>
        <taxon>Euarchontoglires</taxon>
        <taxon>Glires</taxon>
        <taxon>Rodentia</taxon>
        <taxon>Myomorpha</taxon>
        <taxon>Muroidea</taxon>
        <taxon>Muridae</taxon>
        <taxon>Murinae</taxon>
        <taxon>Mus</taxon>
        <taxon>Mus</taxon>
    </lineage>
</organism>